<comment type="function">
    <text evidence="1 5">Type V collagen is a member of group I collagen (fibrillar forming collagen). It is a minor connective tissue component of nearly ubiquitous distribution. Type V collagen binds to DNA, heparan sulfate, thrombospondin, heparin, and insulin (By similarity). Transcriptionally activated by CEBPZ, which recognizes a CCAAT-like motif, CAAAT in the COL5A1 promoter.</text>
</comment>
<comment type="subunit">
    <text evidence="1">Trimers of two alpha 1(V) and one alpha 2(V) chains in most tissues and trimers of one alpha 1(V), one alpha 2(V), and one alpha 3(V) chains in placenta. Interacts with CSPG4 (By similarity).</text>
</comment>
<comment type="subcellular location">
    <subcellularLocation>
        <location evidence="3">Secreted</location>
        <location evidence="3">Extracellular space</location>
        <location evidence="3">Extracellular matrix</location>
    </subcellularLocation>
</comment>
<comment type="alternative products">
    <event type="alternative splicing"/>
    <isoform>
        <id>O88207-1</id>
        <name>1</name>
        <name evidence="8">A</name>
        <sequence type="displayed"/>
    </isoform>
    <isoform>
        <id>O88207-2</id>
        <name>2</name>
        <name evidence="8">B</name>
        <sequence type="described" ref="VSP_059656"/>
    </isoform>
</comment>
<comment type="tissue specificity">
    <text evidence="6">Widely expressed (PubMed:22149965). Isoform 2 is more highly expressed in liver, kidney and lung (PubMed:22149965).</text>
</comment>
<comment type="developmental stage">
    <text evidence="6 7">Detected at 11 dpc, 12 dpc, 14 dpc, 16 dpc and 18 dpc. Expressed in limbs, vertebrae, heart, brain, liver, intestine, tongue, tail, skin, calvaria, lung and kidney of 18 dpc embryos (PubMed:9582436). Isoform 2 is detected at 13.5 dpc and its expression increases from 13.5 dpc to 5 weeks after birth more specially in liver, lung, ileum and heart. The expression slightly decreases after 15 weeks (PubMed:22149965).</text>
</comment>
<comment type="PTM">
    <text evidence="1">Hydroxylation on proline residues within the sequence motif, GXPG, is most likely to be 4-hydroxy as this fits the requirement for 4-hydroxylation in vertebrates.</text>
</comment>
<comment type="PTM">
    <text evidence="1">Sulfated on 40% of tyrosines.</text>
</comment>
<comment type="similarity">
    <text evidence="3">Belongs to the fibrillar collagen family.</text>
</comment>
<sequence>MDVHTRWKAARPGALLLSSPLLLFLLLLWAPPSSRAAQPADLLEMLDFHNLPSGVTKTTGFCATRRSSSEPDVAYRVSKDAQLSMPTKQLYPESGFPEDFSILTTVKAKKGSQAFLVSIYNEQGIQQLGLELGRSPVFLYEDHTGKPGPEEYPLFPGINLSDGKWHRIALSVYKKNVTLILDCKKKITKFLSRSDHPIIDTNGIVMFGSRILDDEIFEGDIQQLLFVSDNRAAYDYCEHYSPDCDTAVPDTPQSQDPNPDEYYPEGEGETYYYEYPYYEDPEDPGKEPAPTQKPVEAARETTEVPEEQTQPLPEAPTVPETSDTADKEDSLGIGDYDYVPPDDYYTPPPYEDFGYGEGVENPDQPTNPDSGAEVPTSTTVTSNTSNPAPGEGKDDLGGEFTEETIKNLEENYYDPYFDPDSDSSVSPSEIGPGMPANQDTIFEGIGGPRGEKGQKGEPAIIEPGMLIEGPPGPEGPAGLPGPPGTTGPTGQMGDPGERGPPGRPGLPGADGLPGPPGTMLMLPFRFGGGGDAGSKGPMVSAQESQAQAILQQARLALRGPAGPMGLTGRPGPMGPPGSGGLKGEPGDMGPQGPRGVQGPPGPTGKPGRRGRAGSDGARGMPGQTGPKGDRGFDGLAGLPGEKGHRGDPGPSGPPGIPGDDGERGDDGEVGPRGLPGEPGPRGLLGPKGPPGPPGPPGVTGMDGQPGPKGNVGPQGEPGPPGQQGNPGAQGLPGPQGAIGPPGEKGPLGKPGLPGMPGADGPPGHPGKEGPPGEKGGQGPPGPQGPIGYPGPRGVKGADGIRGLKGTKGEKGEDGFPGFKGDMGIKGDRGEIGPPGPRGEDGPEGPKGRGGPNGDPGPLGPTGEKGKLGVPGLPGYPGRQGPKGSIGFPGFPGANGEKGGRGTPGKPGPRGQRGPTGPRGERGPRGITGKPGPKGNSGGDGPAGPPGERGPNGPQGPTGFPGPKGPPGPPGKDGLPGHPGQRGETGFQGKTGPPGPPGVVGPQGPTGETGPMGERGHPGPPGPPGEQGLPGAAGKEGTKGDPGPAGLPGKDGPPGLRGFPGDRGLPGPVGALGLKGSEGPPGPPGPAGSPGERGPAGAAGPIGIPGRPGPQGPPGPAGEKGLPGEKGPQGPAGRDGLQGPVGLPGPAGPVGPPGEDGDKGEIGEPGQKGSKGDKGEQGPPGPTGPQGPIGQPGPSGADGEPGPRGQQGLFGQKGDEGSRGFPGPPGPVGLQGLPGPPGEKGETGDVGQMGPPGPPGPRGPSGAPGADGPQGPPGGIGNPGAVGEKGEPGEAGDPGLPGEGGPLGPKGERGEKGEAGPSGAAGPPGPKGPPGDDGPKGSPGPVGFPGDPGPPGEPGPAGQDGPPGDKGDDGEPGQTGSPGPTGEPGPSGPPGKRGPPGPAGPEGRQGEKGAKGEAGLEGPPGKTGPIGPQGAPGKPGPDGLRGIPGPVGEQGLPGSPGPDGPPGPMGPPGLPGLKGDSGPKGEKGHPGLIGLIGPPGEQGEKGDRGLPGPQGSSGPKGDQGITGPSGPLGPPGPPGLPGPPGPKGAKGSSGPTGPKGEAGHPGLPGPPGPPGEVIQPLPIQASRTRRNIDASQLLDDGAGESYVDYADGMEEIFGSLNSLKLEIEQMKRPLGTQQNPARTCKDLQLCHPDFPDGEYWVDPNQGCSRDSFKVYCNFTAGGSTCVFPDKKSEGARITSWPKENPGSWFSEFKRGKLLSYVDAEGNPVGVVQMTFLRLLSASAHQNVTYNCYQSVAWQDAATGSYDKAIRFLGSNDEEMSYDNNPYIRALVDGCATKKGYQKTVLEIDTPKVEQVPIVDIMFNDFGEASQKFGFEVGPACFLG</sequence>
<protein>
    <recommendedName>
        <fullName>Collagen alpha-1(V) chain</fullName>
    </recommendedName>
</protein>
<reference key="1">
    <citation type="journal article" date="1998" name="Biochim. Biophys. Acta">
        <title>cDNA sequence and expression of the mouse alpha1(V) collagen gene.</title>
        <authorList>
            <person name="Wu Y.L."/>
            <person name="Sumiyoshi H."/>
            <person name="Khaleduzzaman M."/>
            <person name="Ninomiya Y."/>
            <person name="Yoshioka H."/>
        </authorList>
    </citation>
    <scope>NUCLEOTIDE SEQUENCE [MRNA] (ISOFORM 1)</scope>
    <scope>TISSUE SPECIFICITY</scope>
    <scope>DEVELOPMENTAL STAGE</scope>
    <source>
        <tissue>Embryo</tissue>
    </source>
</reference>
<reference key="2">
    <citation type="journal article" date="2009" name="PLoS Biol.">
        <title>Lineage-specific biology revealed by a finished genome assembly of the mouse.</title>
        <authorList>
            <person name="Church D.M."/>
            <person name="Goodstadt L."/>
            <person name="Hillier L.W."/>
            <person name="Zody M.C."/>
            <person name="Goldstein S."/>
            <person name="She X."/>
            <person name="Bult C.J."/>
            <person name="Agarwala R."/>
            <person name="Cherry J.L."/>
            <person name="DiCuccio M."/>
            <person name="Hlavina W."/>
            <person name="Kapustin Y."/>
            <person name="Meric P."/>
            <person name="Maglott D."/>
            <person name="Birtle Z."/>
            <person name="Marques A.C."/>
            <person name="Graves T."/>
            <person name="Zhou S."/>
            <person name="Teague B."/>
            <person name="Potamousis K."/>
            <person name="Churas C."/>
            <person name="Place M."/>
            <person name="Herschleb J."/>
            <person name="Runnheim R."/>
            <person name="Forrest D."/>
            <person name="Amos-Landgraf J."/>
            <person name="Schwartz D.C."/>
            <person name="Cheng Z."/>
            <person name="Lindblad-Toh K."/>
            <person name="Eichler E.E."/>
            <person name="Ponting C.P."/>
        </authorList>
    </citation>
    <scope>NUCLEOTIDE SEQUENCE [LARGE SCALE GENOMIC DNA]</scope>
    <source>
        <strain>C57BL/6J</strain>
    </source>
</reference>
<reference key="3">
    <citation type="journal article" date="2004" name="Matrix Biol.">
        <title>Identification of a functional CBF-binding CCAAT-like motif in the core promoter of the mouse pro-alpha1(V) collagen gene (Col5a1).</title>
        <authorList>
            <person name="Sakata-Takatani K."/>
            <person name="Matsuo N."/>
            <person name="Sumiyoshi H."/>
            <person name="Tsuda T."/>
            <person name="Yoshioka H."/>
        </authorList>
    </citation>
    <scope>NUCLEOTIDE SEQUENCE [GENOMIC DNA] OF 1-30</scope>
    <scope>FUNCTION</scope>
</reference>
<reference key="4">
    <citation type="journal article" date="2005" name="Science">
        <title>The transcriptional landscape of the mammalian genome.</title>
        <authorList>
            <person name="Carninci P."/>
            <person name="Kasukawa T."/>
            <person name="Katayama S."/>
            <person name="Gough J."/>
            <person name="Frith M.C."/>
            <person name="Maeda N."/>
            <person name="Oyama R."/>
            <person name="Ravasi T."/>
            <person name="Lenhard B."/>
            <person name="Wells C."/>
            <person name="Kodzius R."/>
            <person name="Shimokawa K."/>
            <person name="Bajic V.B."/>
            <person name="Brenner S.E."/>
            <person name="Batalov S."/>
            <person name="Forrest A.R."/>
            <person name="Zavolan M."/>
            <person name="Davis M.J."/>
            <person name="Wilming L.G."/>
            <person name="Aidinis V."/>
            <person name="Allen J.E."/>
            <person name="Ambesi-Impiombato A."/>
            <person name="Apweiler R."/>
            <person name="Aturaliya R.N."/>
            <person name="Bailey T.L."/>
            <person name="Bansal M."/>
            <person name="Baxter L."/>
            <person name="Beisel K.W."/>
            <person name="Bersano T."/>
            <person name="Bono H."/>
            <person name="Chalk A.M."/>
            <person name="Chiu K.P."/>
            <person name="Choudhary V."/>
            <person name="Christoffels A."/>
            <person name="Clutterbuck D.R."/>
            <person name="Crowe M.L."/>
            <person name="Dalla E."/>
            <person name="Dalrymple B.P."/>
            <person name="de Bono B."/>
            <person name="Della Gatta G."/>
            <person name="di Bernardo D."/>
            <person name="Down T."/>
            <person name="Engstrom P."/>
            <person name="Fagiolini M."/>
            <person name="Faulkner G."/>
            <person name="Fletcher C.F."/>
            <person name="Fukushima T."/>
            <person name="Furuno M."/>
            <person name="Futaki S."/>
            <person name="Gariboldi M."/>
            <person name="Georgii-Hemming P."/>
            <person name="Gingeras T.R."/>
            <person name="Gojobori T."/>
            <person name="Green R.E."/>
            <person name="Gustincich S."/>
            <person name="Harbers M."/>
            <person name="Hayashi Y."/>
            <person name="Hensch T.K."/>
            <person name="Hirokawa N."/>
            <person name="Hill D."/>
            <person name="Huminiecki L."/>
            <person name="Iacono M."/>
            <person name="Ikeo K."/>
            <person name="Iwama A."/>
            <person name="Ishikawa T."/>
            <person name="Jakt M."/>
            <person name="Kanapin A."/>
            <person name="Katoh M."/>
            <person name="Kawasawa Y."/>
            <person name="Kelso J."/>
            <person name="Kitamura H."/>
            <person name="Kitano H."/>
            <person name="Kollias G."/>
            <person name="Krishnan S.P."/>
            <person name="Kruger A."/>
            <person name="Kummerfeld S.K."/>
            <person name="Kurochkin I.V."/>
            <person name="Lareau L.F."/>
            <person name="Lazarevic D."/>
            <person name="Lipovich L."/>
            <person name="Liu J."/>
            <person name="Liuni S."/>
            <person name="McWilliam S."/>
            <person name="Madan Babu M."/>
            <person name="Madera M."/>
            <person name="Marchionni L."/>
            <person name="Matsuda H."/>
            <person name="Matsuzawa S."/>
            <person name="Miki H."/>
            <person name="Mignone F."/>
            <person name="Miyake S."/>
            <person name="Morris K."/>
            <person name="Mottagui-Tabar S."/>
            <person name="Mulder N."/>
            <person name="Nakano N."/>
            <person name="Nakauchi H."/>
            <person name="Ng P."/>
            <person name="Nilsson R."/>
            <person name="Nishiguchi S."/>
            <person name="Nishikawa S."/>
            <person name="Nori F."/>
            <person name="Ohara O."/>
            <person name="Okazaki Y."/>
            <person name="Orlando V."/>
            <person name="Pang K.C."/>
            <person name="Pavan W.J."/>
            <person name="Pavesi G."/>
            <person name="Pesole G."/>
            <person name="Petrovsky N."/>
            <person name="Piazza S."/>
            <person name="Reed J."/>
            <person name="Reid J.F."/>
            <person name="Ring B.Z."/>
            <person name="Ringwald M."/>
            <person name="Rost B."/>
            <person name="Ruan Y."/>
            <person name="Salzberg S.L."/>
            <person name="Sandelin A."/>
            <person name="Schneider C."/>
            <person name="Schoenbach C."/>
            <person name="Sekiguchi K."/>
            <person name="Semple C.A."/>
            <person name="Seno S."/>
            <person name="Sessa L."/>
            <person name="Sheng Y."/>
            <person name="Shibata Y."/>
            <person name="Shimada H."/>
            <person name="Shimada K."/>
            <person name="Silva D."/>
            <person name="Sinclair B."/>
            <person name="Sperling S."/>
            <person name="Stupka E."/>
            <person name="Sugiura K."/>
            <person name="Sultana R."/>
            <person name="Takenaka Y."/>
            <person name="Taki K."/>
            <person name="Tammoja K."/>
            <person name="Tan S.L."/>
            <person name="Tang S."/>
            <person name="Taylor M.S."/>
            <person name="Tegner J."/>
            <person name="Teichmann S.A."/>
            <person name="Ueda H.R."/>
            <person name="van Nimwegen E."/>
            <person name="Verardo R."/>
            <person name="Wei C.L."/>
            <person name="Yagi K."/>
            <person name="Yamanishi H."/>
            <person name="Zabarovsky E."/>
            <person name="Zhu S."/>
            <person name="Zimmer A."/>
            <person name="Hide W."/>
            <person name="Bult C."/>
            <person name="Grimmond S.M."/>
            <person name="Teasdale R.D."/>
            <person name="Liu E.T."/>
            <person name="Brusic V."/>
            <person name="Quackenbush J."/>
            <person name="Wahlestedt C."/>
            <person name="Mattick J.S."/>
            <person name="Hume D.A."/>
            <person name="Kai C."/>
            <person name="Sasaki D."/>
            <person name="Tomaru Y."/>
            <person name="Fukuda S."/>
            <person name="Kanamori-Katayama M."/>
            <person name="Suzuki M."/>
            <person name="Aoki J."/>
            <person name="Arakawa T."/>
            <person name="Iida J."/>
            <person name="Imamura K."/>
            <person name="Itoh M."/>
            <person name="Kato T."/>
            <person name="Kawaji H."/>
            <person name="Kawagashira N."/>
            <person name="Kawashima T."/>
            <person name="Kojima M."/>
            <person name="Kondo S."/>
            <person name="Konno H."/>
            <person name="Nakano K."/>
            <person name="Ninomiya N."/>
            <person name="Nishio T."/>
            <person name="Okada M."/>
            <person name="Plessy C."/>
            <person name="Shibata K."/>
            <person name="Shiraki T."/>
            <person name="Suzuki S."/>
            <person name="Tagami M."/>
            <person name="Waki K."/>
            <person name="Watahiki A."/>
            <person name="Okamura-Oho Y."/>
            <person name="Suzuki H."/>
            <person name="Kawai J."/>
            <person name="Hayashizaki Y."/>
        </authorList>
    </citation>
    <scope>NUCLEOTIDE SEQUENCE [LARGE SCALE MRNA] OF 1156-1838 (ISOFORM 1)</scope>
    <source>
        <strain>C57BL/6J</strain>
    </source>
</reference>
<reference key="5">
    <citation type="journal article" date="2010" name="Cell">
        <title>A tissue-specific atlas of mouse protein phosphorylation and expression.</title>
        <authorList>
            <person name="Huttlin E.L."/>
            <person name="Jedrychowski M.P."/>
            <person name="Elias J.E."/>
            <person name="Goswami T."/>
            <person name="Rad R."/>
            <person name="Beausoleil S.A."/>
            <person name="Villen J."/>
            <person name="Haas W."/>
            <person name="Sowa M.E."/>
            <person name="Gygi S.P."/>
        </authorList>
    </citation>
    <scope>IDENTIFICATION BY MASS SPECTROMETRY [LARGE SCALE ANALYSIS]</scope>
    <source>
        <tissue>Kidney</tissue>
    </source>
</reference>
<reference key="6">
    <citation type="journal article" date="2012" name="Connect. Tissue Res.">
        <title>Characterization of tissue-specific and developmentally regulated alternative splicing of exon 64 in the COL5A1 gene.</title>
        <authorList>
            <person name="Mitchell A.L."/>
            <person name="Judis L.M."/>
            <person name="Schwarze U."/>
            <person name="Vaynshtok P.M."/>
            <person name="Drumm M.L."/>
            <person name="Byers P.H."/>
        </authorList>
    </citation>
    <scope>ALTERNATIVE SPLICING (ISOFORMS 1 AND 2)</scope>
    <scope>TISSUE SPECIFICITY</scope>
    <scope>DEVELOPMENTAL STAGE (ISOFORM 2)</scope>
</reference>
<gene>
    <name type="primary">Col5a1</name>
</gene>
<name>CO5A1_MOUSE</name>
<organism>
    <name type="scientific">Mus musculus</name>
    <name type="common">Mouse</name>
    <dbReference type="NCBI Taxonomy" id="10090"/>
    <lineage>
        <taxon>Eukaryota</taxon>
        <taxon>Metazoa</taxon>
        <taxon>Chordata</taxon>
        <taxon>Craniata</taxon>
        <taxon>Vertebrata</taxon>
        <taxon>Euteleostomi</taxon>
        <taxon>Mammalia</taxon>
        <taxon>Eutheria</taxon>
        <taxon>Euarchontoglires</taxon>
        <taxon>Glires</taxon>
        <taxon>Rodentia</taxon>
        <taxon>Myomorpha</taxon>
        <taxon>Muroidea</taxon>
        <taxon>Muridae</taxon>
        <taxon>Murinae</taxon>
        <taxon>Mus</taxon>
        <taxon>Mus</taxon>
    </lineage>
</organism>
<feature type="signal peptide" evidence="2">
    <location>
        <begin position="1"/>
        <end position="36"/>
    </location>
</feature>
<feature type="chain" id="PRO_0000041761" description="Collagen alpha-1(V) chain">
    <location>
        <begin position="37"/>
        <end position="1838"/>
    </location>
</feature>
<feature type="domain" description="Laminin G-like">
    <location>
        <begin position="72"/>
        <end position="244"/>
    </location>
</feature>
<feature type="domain" description="Fibrillar collagen NC1" evidence="3">
    <location>
        <begin position="1609"/>
        <end position="1837"/>
    </location>
</feature>
<feature type="region of interest" description="Nonhelical region" evidence="1">
    <location>
        <begin position="231"/>
        <end position="443"/>
    </location>
</feature>
<feature type="region of interest" description="Disordered" evidence="4">
    <location>
        <begin position="242"/>
        <end position="545"/>
    </location>
</feature>
<feature type="region of interest" description="Interrupted collagenous region" evidence="1">
    <location>
        <begin position="444"/>
        <end position="558"/>
    </location>
</feature>
<feature type="region of interest" description="Disordered" evidence="4">
    <location>
        <begin position="559"/>
        <end position="1574"/>
    </location>
</feature>
<feature type="region of interest" description="Triple-helical region" evidence="1">
    <location>
        <begin position="559"/>
        <end position="1570"/>
    </location>
</feature>
<feature type="region of interest" description="Nonhelical region" evidence="1">
    <location>
        <begin position="1571"/>
        <end position="1605"/>
    </location>
</feature>
<feature type="compositionally biased region" description="Acidic residues" evidence="4">
    <location>
        <begin position="258"/>
        <end position="268"/>
    </location>
</feature>
<feature type="compositionally biased region" description="Low complexity" evidence="4">
    <location>
        <begin position="335"/>
        <end position="345"/>
    </location>
</feature>
<feature type="compositionally biased region" description="Low complexity" evidence="4">
    <location>
        <begin position="374"/>
        <end position="387"/>
    </location>
</feature>
<feature type="compositionally biased region" description="Low complexity" evidence="4">
    <location>
        <begin position="413"/>
        <end position="428"/>
    </location>
</feature>
<feature type="compositionally biased region" description="Low complexity" evidence="4">
    <location>
        <begin position="460"/>
        <end position="469"/>
    </location>
</feature>
<feature type="compositionally biased region" description="Pro residues" evidence="4">
    <location>
        <begin position="470"/>
        <end position="485"/>
    </location>
</feature>
<feature type="compositionally biased region" description="Low complexity" evidence="4">
    <location>
        <begin position="506"/>
        <end position="523"/>
    </location>
</feature>
<feature type="compositionally biased region" description="Low complexity" evidence="4">
    <location>
        <begin position="559"/>
        <end position="570"/>
    </location>
</feature>
<feature type="compositionally biased region" description="Low complexity" evidence="4">
    <location>
        <begin position="671"/>
        <end position="686"/>
    </location>
</feature>
<feature type="compositionally biased region" description="Pro residues" evidence="4">
    <location>
        <begin position="687"/>
        <end position="696"/>
    </location>
</feature>
<feature type="compositionally biased region" description="Low complexity" evidence="4">
    <location>
        <begin position="722"/>
        <end position="741"/>
    </location>
</feature>
<feature type="compositionally biased region" description="Low complexity" evidence="4">
    <location>
        <begin position="747"/>
        <end position="756"/>
    </location>
</feature>
<feature type="compositionally biased region" description="Basic and acidic residues" evidence="4">
    <location>
        <begin position="837"/>
        <end position="846"/>
    </location>
</feature>
<feature type="compositionally biased region" description="Low complexity" evidence="4">
    <location>
        <begin position="908"/>
        <end position="917"/>
    </location>
</feature>
<feature type="compositionally biased region" description="Low complexity" evidence="4">
    <location>
        <begin position="971"/>
        <end position="990"/>
    </location>
</feature>
<feature type="compositionally biased region" description="Low complexity" evidence="4">
    <location>
        <begin position="999"/>
        <end position="1011"/>
    </location>
</feature>
<feature type="compositionally biased region" description="Low complexity" evidence="4">
    <location>
        <begin position="1088"/>
        <end position="1104"/>
    </location>
</feature>
<feature type="compositionally biased region" description="Pro residues" evidence="4">
    <location>
        <begin position="1106"/>
        <end position="1115"/>
    </location>
</feature>
<feature type="compositionally biased region" description="Low complexity" evidence="4">
    <location>
        <begin position="1259"/>
        <end position="1268"/>
    </location>
</feature>
<feature type="compositionally biased region" description="Gly residues" evidence="4">
    <location>
        <begin position="1294"/>
        <end position="1303"/>
    </location>
</feature>
<feature type="compositionally biased region" description="Pro residues" evidence="4">
    <location>
        <begin position="1380"/>
        <end position="1398"/>
    </location>
</feature>
<feature type="compositionally biased region" description="Pro residues" evidence="4">
    <location>
        <begin position="1454"/>
        <end position="1469"/>
    </location>
</feature>
<feature type="compositionally biased region" description="Low complexity" evidence="4">
    <location>
        <begin position="1485"/>
        <end position="1494"/>
    </location>
</feature>
<feature type="compositionally biased region" description="Pro residues" evidence="4">
    <location>
        <begin position="1526"/>
        <end position="1541"/>
    </location>
</feature>
<feature type="compositionally biased region" description="Low complexity" evidence="4">
    <location>
        <begin position="1542"/>
        <end position="1554"/>
    </location>
</feature>
<feature type="modified residue" description="Sulfotyrosine" evidence="2">
    <location>
        <position position="234"/>
    </location>
</feature>
<feature type="modified residue" description="Sulfotyrosine" evidence="2">
    <location>
        <position position="236"/>
    </location>
</feature>
<feature type="modified residue" description="Sulfotyrosine" evidence="2">
    <location>
        <position position="240"/>
    </location>
</feature>
<feature type="modified residue" description="Sulfotyrosine" evidence="2">
    <location>
        <position position="262"/>
    </location>
</feature>
<feature type="modified residue" description="Sulfotyrosine" evidence="2">
    <location>
        <position position="263"/>
    </location>
</feature>
<feature type="modified residue" description="4-hydroxyproline" evidence="1">
    <location>
        <position position="570"/>
    </location>
</feature>
<feature type="modified residue" description="4-hydroxyproline" evidence="1">
    <location>
        <position position="576"/>
    </location>
</feature>
<feature type="modified residue" description="4-hydroxyproline" evidence="1">
    <location>
        <position position="621"/>
    </location>
</feature>
<feature type="modified residue" description="5-hydroxylysine" evidence="1">
    <location>
        <position position="627"/>
    </location>
</feature>
<feature type="modified residue" description="4-hydroxyproline" evidence="1">
    <location>
        <position position="639"/>
    </location>
</feature>
<feature type="modified residue" description="5-hydroxylysine" evidence="1">
    <location>
        <position position="642"/>
    </location>
</feature>
<feature type="modified residue" description="4-hydroxyproline" evidence="1">
    <location>
        <position position="648"/>
    </location>
</feature>
<feature type="modified residue" description="4-hydroxyproline" evidence="1">
    <location>
        <position position="654"/>
    </location>
</feature>
<feature type="modified residue" description="4-hydroxyproline" evidence="1">
    <location>
        <position position="657"/>
    </location>
</feature>
<feature type="modified residue" description="4-hydroxyproline" evidence="1">
    <location>
        <position position="675"/>
    </location>
</feature>
<feature type="modified residue" description="4-hydroxyproline" evidence="1">
    <location>
        <position position="678"/>
    </location>
</feature>
<feature type="modified residue" description="3-hydroxyproline" evidence="1">
    <location>
        <position position="680"/>
    </location>
</feature>
<feature type="modified residue" description="3-hydroxyproline" evidence="1">
    <location>
        <position position="686"/>
    </location>
</feature>
<feature type="modified residue" description="4-hydroxyproline" evidence="1">
    <location>
        <position position="690"/>
    </location>
</feature>
<feature type="modified residue" description="4-hydroxyproline" evidence="1">
    <location>
        <position position="696"/>
    </location>
</feature>
<feature type="modified residue" description="4-hydroxyproline" evidence="1">
    <location>
        <position position="705"/>
    </location>
</feature>
<feature type="modified residue" description="5-hydroxylysine" evidence="1">
    <location>
        <position position="708"/>
    </location>
</feature>
<feature type="modified residue" description="4-hydroxyproline" evidence="1">
    <location>
        <position position="717"/>
    </location>
</feature>
<feature type="modified residue" description="4-hydroxyproline" evidence="1">
    <location>
        <position position="720"/>
    </location>
</feature>
<feature type="modified residue" description="4-hydroxyproline" evidence="1">
    <location>
        <position position="726"/>
    </location>
</feature>
<feature type="modified residue" description="4-hydroxyproline" evidence="1">
    <location>
        <position position="732"/>
    </location>
</feature>
<feature type="modified residue" description="5-hydroxylysine" evidence="1">
    <location>
        <position position="744"/>
    </location>
</feature>
<feature type="modified residue" description="4-hydroxyproline" evidence="1">
    <location>
        <position position="750"/>
    </location>
</feature>
<feature type="modified residue" description="4-hydroxyproline" evidence="1">
    <location>
        <position position="756"/>
    </location>
</feature>
<feature type="modified residue" description="4-hydroxyproline" evidence="1">
    <location>
        <position position="762"/>
    </location>
</feature>
<feature type="modified residue" description="4-hydroxyproline" evidence="1">
    <location>
        <position position="765"/>
    </location>
</feature>
<feature type="modified residue" description="4-hydroxyproline" evidence="1">
    <location>
        <position position="771"/>
    </location>
</feature>
<feature type="modified residue" description="5-hydroxylysine" evidence="1">
    <location>
        <position position="774"/>
    </location>
</feature>
<feature type="modified residue" description="4-hydroxyproline" evidence="1">
    <location>
        <position position="780"/>
    </location>
</feature>
<feature type="modified residue" description="4-hydroxyproline" evidence="1">
    <location>
        <position position="789"/>
    </location>
</feature>
<feature type="modified residue" description="5-hydroxylysine" evidence="1">
    <location>
        <position position="795"/>
    </location>
</feature>
<feature type="modified residue" description="5-hydroxylysine" evidence="1">
    <location>
        <position position="804"/>
    </location>
</feature>
<feature type="modified residue" description="5-hydroxylysine" evidence="1">
    <location>
        <position position="807"/>
    </location>
</feature>
<feature type="modified residue" description="5-hydroxylysine" evidence="1">
    <location>
        <position position="810"/>
    </location>
</feature>
<feature type="modified residue" description="4-hydroxyproline" evidence="1">
    <location>
        <position position="816"/>
    </location>
</feature>
<feature type="modified residue" description="5-hydroxylysine" evidence="1">
    <location>
        <position position="819"/>
    </location>
</feature>
<feature type="modified residue" description="4-hydroxyproline" evidence="1">
    <location>
        <position position="834"/>
    </location>
</feature>
<feature type="modified residue" description="5-hydroxylysine" evidence="1">
    <location>
        <position position="846"/>
    </location>
</feature>
<feature type="modified residue" description="5-hydroxylysine" evidence="1">
    <location>
        <position position="864"/>
    </location>
</feature>
<feature type="modified residue" description="4-hydroxyproline" evidence="1">
    <location>
        <position position="870"/>
    </location>
</feature>
<feature type="modified residue" description="4-hydroxyproline" evidence="1">
    <location>
        <position position="873"/>
    </location>
</feature>
<feature type="modified residue" description="4-hydroxyproline" evidence="1">
    <location>
        <position position="876"/>
    </location>
</feature>
<feature type="modified residue" description="5-hydroxylysine" evidence="1">
    <location>
        <position position="882"/>
    </location>
</feature>
<feature type="modified residue" description="4-hydroxyproline" evidence="1">
    <location>
        <position position="888"/>
    </location>
</feature>
<feature type="modified residue" description="4-hydroxyproline" evidence="1">
    <location>
        <position position="891"/>
    </location>
</feature>
<feature type="modified residue" description="5-hydroxylysine" evidence="1">
    <location>
        <position position="897"/>
    </location>
</feature>
<feature type="modified residue" description="4-hydroxyproline" evidence="1">
    <location>
        <position position="903"/>
    </location>
</feature>
<feature type="modified residue" description="4-hydroxyproline" evidence="1">
    <location>
        <position position="906"/>
    </location>
</feature>
<feature type="modified residue" description="4-hydroxyproline" evidence="1">
    <location>
        <position position="930"/>
    </location>
</feature>
<feature type="modified residue" description="4-hydroxyproline" evidence="1">
    <location>
        <position position="945"/>
    </location>
</feature>
<feature type="modified residue" description="4-hydroxyproline" evidence="1">
    <location>
        <position position="1017"/>
    </location>
</feature>
<feature type="modified residue" description="4-hydroxyproline" evidence="1">
    <location>
        <position position="1020"/>
    </location>
</feature>
<feature type="modified residue" description="4-hydroxyproline" evidence="1">
    <location>
        <position position="1023"/>
    </location>
</feature>
<feature type="modified residue" description="4-hydroxyproline" evidence="1">
    <location>
        <position position="1029"/>
    </location>
</feature>
<feature type="modified residue" description="4-hydroxyproline" evidence="1">
    <location>
        <position position="1221"/>
    </location>
</feature>
<feature type="modified residue" description="4-hydroxyproline" evidence="1">
    <location>
        <position position="1224"/>
    </location>
</feature>
<feature type="modified residue" description="4-hydroxyproline" evidence="1">
    <location>
        <position position="1467"/>
    </location>
</feature>
<feature type="modified residue" description="4-hydroxyproline" evidence="1">
    <location>
        <position position="1470"/>
    </location>
</feature>
<feature type="modified residue" description="Sulfotyrosine" evidence="2">
    <location>
        <position position="1601"/>
    </location>
</feature>
<feature type="modified residue" description="Sulfotyrosine" evidence="2">
    <location>
        <position position="1604"/>
    </location>
</feature>
<feature type="splice variant" id="VSP_059656" description="In isoform 2.">
    <original>ARITSWPKENPGSWFSEFKRGKL</original>
    <variation>SKMARWPKEQPSTWYSQYKRGSL</variation>
    <location>
        <begin position="1690"/>
        <end position="1712"/>
    </location>
</feature>
<feature type="sequence conflict" description="In Ref. 1; BAA28786." evidence="9" ref="1">
    <original>A</original>
    <variation>S</variation>
    <location>
        <position position="1097"/>
    </location>
</feature>
<evidence type="ECO:0000250" key="1"/>
<evidence type="ECO:0000255" key="2"/>
<evidence type="ECO:0000255" key="3">
    <source>
        <dbReference type="PROSITE-ProRule" id="PRU00793"/>
    </source>
</evidence>
<evidence type="ECO:0000256" key="4">
    <source>
        <dbReference type="SAM" id="MobiDB-lite"/>
    </source>
</evidence>
<evidence type="ECO:0000269" key="5">
    <source>
    </source>
</evidence>
<evidence type="ECO:0000269" key="6">
    <source>
    </source>
</evidence>
<evidence type="ECO:0000269" key="7">
    <source>
    </source>
</evidence>
<evidence type="ECO:0000303" key="8">
    <source>
    </source>
</evidence>
<evidence type="ECO:0000305" key="9"/>
<dbReference type="EMBL" id="AB009993">
    <property type="protein sequence ID" value="BAA28786.1"/>
    <property type="molecule type" value="mRNA"/>
</dbReference>
<dbReference type="EMBL" id="AL731778">
    <property type="status" value="NOT_ANNOTATED_CDS"/>
    <property type="molecule type" value="Genomic_DNA"/>
</dbReference>
<dbReference type="EMBL" id="AL732513">
    <property type="status" value="NOT_ANNOTATED_CDS"/>
    <property type="molecule type" value="Genomic_DNA"/>
</dbReference>
<dbReference type="EMBL" id="AB098608">
    <property type="protein sequence ID" value="BAD26732.1"/>
    <property type="molecule type" value="Genomic_DNA"/>
</dbReference>
<dbReference type="EMBL" id="AK148055">
    <property type="protein sequence ID" value="BAE28315.1"/>
    <property type="molecule type" value="mRNA"/>
</dbReference>
<dbReference type="CCDS" id="CCDS15831.1">
    <molecule id="O88207-1"/>
</dbReference>
<dbReference type="RefSeq" id="NP_056549.2">
    <molecule id="O88207-1"/>
    <property type="nucleotide sequence ID" value="NM_015734.2"/>
</dbReference>
<dbReference type="RefSeq" id="XP_006497707.1">
    <molecule id="O88207-2"/>
    <property type="nucleotide sequence ID" value="XM_006497644.5"/>
</dbReference>
<dbReference type="SMR" id="O88207"/>
<dbReference type="BioGRID" id="198821">
    <property type="interactions" value="16"/>
</dbReference>
<dbReference type="ComplexPortal" id="CPX-2962">
    <property type="entry name" value="Collagen type V trimer variant 1"/>
</dbReference>
<dbReference type="ComplexPortal" id="CPX-2963">
    <property type="entry name" value="Collagen type V trimer variant 2"/>
</dbReference>
<dbReference type="ComplexPortal" id="CPX-2964">
    <property type="entry name" value="Collagen type V trimer variant 3"/>
</dbReference>
<dbReference type="ComplexPortal" id="CPX-2977">
    <property type="entry name" value="Collagen type XI trimer variant 3"/>
</dbReference>
<dbReference type="FunCoup" id="O88207">
    <property type="interactions" value="193"/>
</dbReference>
<dbReference type="IntAct" id="O88207">
    <property type="interactions" value="1"/>
</dbReference>
<dbReference type="STRING" id="10090.ENSMUSP00000028280"/>
<dbReference type="GlyGen" id="O88207">
    <property type="glycosylation" value="7 sites, 2 N-linked glycans (3 sites)"/>
</dbReference>
<dbReference type="iPTMnet" id="O88207"/>
<dbReference type="PhosphoSitePlus" id="O88207"/>
<dbReference type="jPOST" id="O88207"/>
<dbReference type="PaxDb" id="10090-ENSMUSP00000028280"/>
<dbReference type="PeptideAtlas" id="O88207"/>
<dbReference type="ProteomicsDB" id="283543">
    <molecule id="O88207-1"/>
</dbReference>
<dbReference type="Pumba" id="O88207"/>
<dbReference type="Antibodypedia" id="3446">
    <property type="antibodies" value="450 antibodies from 37 providers"/>
</dbReference>
<dbReference type="DNASU" id="12831"/>
<dbReference type="Ensembl" id="ENSMUST00000028280.14">
    <molecule id="O88207-1"/>
    <property type="protein sequence ID" value="ENSMUSP00000028280.8"/>
    <property type="gene ID" value="ENSMUSG00000026837.17"/>
</dbReference>
<dbReference type="GeneID" id="12831"/>
<dbReference type="KEGG" id="mmu:12831"/>
<dbReference type="UCSC" id="uc008ixt.2">
    <molecule id="O88207-1"/>
    <property type="organism name" value="mouse"/>
</dbReference>
<dbReference type="AGR" id="MGI:88457"/>
<dbReference type="CTD" id="1289"/>
<dbReference type="MGI" id="MGI:88457">
    <property type="gene designation" value="Col5a1"/>
</dbReference>
<dbReference type="VEuPathDB" id="HostDB:ENSMUSG00000026837"/>
<dbReference type="eggNOG" id="KOG3544">
    <property type="taxonomic scope" value="Eukaryota"/>
</dbReference>
<dbReference type="GeneTree" id="ENSGT00940000159211"/>
<dbReference type="HOGENOM" id="CLU_001074_2_1_1"/>
<dbReference type="InParanoid" id="O88207"/>
<dbReference type="OMA" id="PGHEGMQ"/>
<dbReference type="OrthoDB" id="8939548at2759"/>
<dbReference type="PhylomeDB" id="O88207"/>
<dbReference type="TreeFam" id="TF323987"/>
<dbReference type="Reactome" id="R-MMU-1442490">
    <property type="pathway name" value="Collagen degradation"/>
</dbReference>
<dbReference type="Reactome" id="R-MMU-1474244">
    <property type="pathway name" value="Extracellular matrix organization"/>
</dbReference>
<dbReference type="Reactome" id="R-MMU-1650814">
    <property type="pathway name" value="Collagen biosynthesis and modifying enzymes"/>
</dbReference>
<dbReference type="Reactome" id="R-MMU-186797">
    <property type="pathway name" value="Signaling by PDGF"/>
</dbReference>
<dbReference type="Reactome" id="R-MMU-2022090">
    <property type="pathway name" value="Assembly of collagen fibrils and other multimeric structures"/>
</dbReference>
<dbReference type="Reactome" id="R-MMU-216083">
    <property type="pathway name" value="Integrin cell surface interactions"/>
</dbReference>
<dbReference type="Reactome" id="R-MMU-3000171">
    <property type="pathway name" value="Non-integrin membrane-ECM interactions"/>
</dbReference>
<dbReference type="Reactome" id="R-MMU-3000178">
    <property type="pathway name" value="ECM proteoglycans"/>
</dbReference>
<dbReference type="Reactome" id="R-MMU-419037">
    <property type="pathway name" value="NCAM1 interactions"/>
</dbReference>
<dbReference type="Reactome" id="R-MMU-8874081">
    <property type="pathway name" value="MET activates PTK2 signaling"/>
</dbReference>
<dbReference type="Reactome" id="R-MMU-8948216">
    <property type="pathway name" value="Collagen chain trimerization"/>
</dbReference>
<dbReference type="BioGRID-ORCS" id="12831">
    <property type="hits" value="2 hits in 79 CRISPR screens"/>
</dbReference>
<dbReference type="ChiTaRS" id="Col5a1">
    <property type="organism name" value="mouse"/>
</dbReference>
<dbReference type="PRO" id="PR:O88207"/>
<dbReference type="Proteomes" id="UP000000589">
    <property type="component" value="Chromosome 2"/>
</dbReference>
<dbReference type="RNAct" id="O88207">
    <property type="molecule type" value="protein"/>
</dbReference>
<dbReference type="Bgee" id="ENSMUSG00000026837">
    <property type="expression patterns" value="Expressed in umbilical cord and 263 other cell types or tissues"/>
</dbReference>
<dbReference type="ExpressionAtlas" id="O88207">
    <property type="expression patterns" value="baseline and differential"/>
</dbReference>
<dbReference type="GO" id="GO:0005604">
    <property type="term" value="C:basement membrane"/>
    <property type="evidence" value="ECO:0000314"/>
    <property type="project" value="MGI"/>
</dbReference>
<dbReference type="GO" id="GO:0005581">
    <property type="term" value="C:collagen trimer"/>
    <property type="evidence" value="ECO:0000314"/>
    <property type="project" value="MGI"/>
</dbReference>
<dbReference type="GO" id="GO:0005588">
    <property type="term" value="C:collagen type V trimer"/>
    <property type="evidence" value="ECO:0007669"/>
    <property type="project" value="Ensembl"/>
</dbReference>
<dbReference type="GO" id="GO:0005592">
    <property type="term" value="C:collagen type XI trimer"/>
    <property type="evidence" value="ECO:0000303"/>
    <property type="project" value="ComplexPortal"/>
</dbReference>
<dbReference type="GO" id="GO:0062023">
    <property type="term" value="C:collagen-containing extracellular matrix"/>
    <property type="evidence" value="ECO:0007005"/>
    <property type="project" value="UniProtKB"/>
</dbReference>
<dbReference type="GO" id="GO:0031012">
    <property type="term" value="C:extracellular matrix"/>
    <property type="evidence" value="ECO:0000314"/>
    <property type="project" value="MGI"/>
</dbReference>
<dbReference type="GO" id="GO:0005615">
    <property type="term" value="C:extracellular space"/>
    <property type="evidence" value="ECO:0007005"/>
    <property type="project" value="BHF-UCL"/>
</dbReference>
<dbReference type="GO" id="GO:0005201">
    <property type="term" value="F:extracellular matrix structural constituent"/>
    <property type="evidence" value="ECO:0000314"/>
    <property type="project" value="MGI"/>
</dbReference>
<dbReference type="GO" id="GO:0008201">
    <property type="term" value="F:heparin binding"/>
    <property type="evidence" value="ECO:0007669"/>
    <property type="project" value="UniProtKB-KW"/>
</dbReference>
<dbReference type="GO" id="GO:0048407">
    <property type="term" value="F:platelet-derived growth factor binding"/>
    <property type="evidence" value="ECO:0000266"/>
    <property type="project" value="MGI"/>
</dbReference>
<dbReference type="GO" id="GO:0043394">
    <property type="term" value="F:proteoglycan binding"/>
    <property type="evidence" value="ECO:0007669"/>
    <property type="project" value="Ensembl"/>
</dbReference>
<dbReference type="GO" id="GO:0001568">
    <property type="term" value="P:blood vessel development"/>
    <property type="evidence" value="ECO:0000315"/>
    <property type="project" value="MGI"/>
</dbReference>
<dbReference type="GO" id="GO:0007155">
    <property type="term" value="P:cell adhesion"/>
    <property type="evidence" value="ECO:0007669"/>
    <property type="project" value="Ensembl"/>
</dbReference>
<dbReference type="GO" id="GO:0032964">
    <property type="term" value="P:collagen biosynthetic process"/>
    <property type="evidence" value="ECO:0007669"/>
    <property type="project" value="Ensembl"/>
</dbReference>
<dbReference type="GO" id="GO:0030199">
    <property type="term" value="P:collagen fibril organization"/>
    <property type="evidence" value="ECO:0000315"/>
    <property type="project" value="MGI"/>
</dbReference>
<dbReference type="GO" id="GO:0048592">
    <property type="term" value="P:eye morphogenesis"/>
    <property type="evidence" value="ECO:0007669"/>
    <property type="project" value="Ensembl"/>
</dbReference>
<dbReference type="GO" id="GO:0003007">
    <property type="term" value="P:heart morphogenesis"/>
    <property type="evidence" value="ECO:0000316"/>
    <property type="project" value="MGI"/>
</dbReference>
<dbReference type="GO" id="GO:0045112">
    <property type="term" value="P:integrin biosynthetic process"/>
    <property type="evidence" value="ECO:0007669"/>
    <property type="project" value="Ensembl"/>
</dbReference>
<dbReference type="GO" id="GO:1903225">
    <property type="term" value="P:negative regulation of endodermal cell differentiation"/>
    <property type="evidence" value="ECO:0007669"/>
    <property type="project" value="Ensembl"/>
</dbReference>
<dbReference type="GO" id="GO:0051128">
    <property type="term" value="P:regulation of cellular component organization"/>
    <property type="evidence" value="ECO:0000315"/>
    <property type="project" value="MGI"/>
</dbReference>
<dbReference type="GO" id="GO:0043588">
    <property type="term" value="P:skin development"/>
    <property type="evidence" value="ECO:0000315"/>
    <property type="project" value="MGI"/>
</dbReference>
<dbReference type="GO" id="GO:0035989">
    <property type="term" value="P:tendon development"/>
    <property type="evidence" value="ECO:0000315"/>
    <property type="project" value="MGI"/>
</dbReference>
<dbReference type="GO" id="GO:0035313">
    <property type="term" value="P:wound healing, spreading of epidermal cells"/>
    <property type="evidence" value="ECO:0007669"/>
    <property type="project" value="Ensembl"/>
</dbReference>
<dbReference type="CDD" id="cd00110">
    <property type="entry name" value="LamG"/>
    <property type="match status" value="1"/>
</dbReference>
<dbReference type="FunFam" id="2.60.120.1000:FF:000002">
    <property type="entry name" value="Collagen XI alpha 1 chain"/>
    <property type="match status" value="1"/>
</dbReference>
<dbReference type="FunFam" id="2.60.120.200:FF:000016">
    <property type="entry name" value="Collagen XI alpha 1 chain"/>
    <property type="match status" value="1"/>
</dbReference>
<dbReference type="Gene3D" id="2.60.120.1000">
    <property type="match status" value="1"/>
</dbReference>
<dbReference type="Gene3D" id="2.60.120.200">
    <property type="match status" value="1"/>
</dbReference>
<dbReference type="InterPro" id="IPR008160">
    <property type="entry name" value="Collagen"/>
</dbReference>
<dbReference type="InterPro" id="IPR050149">
    <property type="entry name" value="Collagen_superfamily"/>
</dbReference>
<dbReference type="InterPro" id="IPR013320">
    <property type="entry name" value="ConA-like_dom_sf"/>
</dbReference>
<dbReference type="InterPro" id="IPR000885">
    <property type="entry name" value="Fib_collagen_C"/>
</dbReference>
<dbReference type="InterPro" id="IPR001791">
    <property type="entry name" value="Laminin_G"/>
</dbReference>
<dbReference type="InterPro" id="IPR048287">
    <property type="entry name" value="TSPN-like_N"/>
</dbReference>
<dbReference type="PANTHER" id="PTHR24023">
    <property type="entry name" value="COLLAGEN ALPHA"/>
    <property type="match status" value="1"/>
</dbReference>
<dbReference type="PANTHER" id="PTHR24023:SF1095">
    <property type="entry name" value="EGF-LIKE DOMAIN-CONTAINING PROTEIN"/>
    <property type="match status" value="1"/>
</dbReference>
<dbReference type="Pfam" id="PF01410">
    <property type="entry name" value="COLFI"/>
    <property type="match status" value="1"/>
</dbReference>
<dbReference type="Pfam" id="PF01391">
    <property type="entry name" value="Collagen"/>
    <property type="match status" value="6"/>
</dbReference>
<dbReference type="Pfam" id="PF02210">
    <property type="entry name" value="Laminin_G_2"/>
    <property type="match status" value="1"/>
</dbReference>
<dbReference type="SMART" id="SM00038">
    <property type="entry name" value="COLFI"/>
    <property type="match status" value="1"/>
</dbReference>
<dbReference type="SMART" id="SM00210">
    <property type="entry name" value="TSPN"/>
    <property type="match status" value="1"/>
</dbReference>
<dbReference type="SUPFAM" id="SSF49899">
    <property type="entry name" value="Concanavalin A-like lectins/glucanases"/>
    <property type="match status" value="1"/>
</dbReference>
<dbReference type="PROSITE" id="PS51461">
    <property type="entry name" value="NC1_FIB"/>
    <property type="match status" value="1"/>
</dbReference>
<keyword id="KW-0025">Alternative splicing</keyword>
<keyword id="KW-0176">Collagen</keyword>
<keyword id="KW-0272">Extracellular matrix</keyword>
<keyword id="KW-0358">Heparin-binding</keyword>
<keyword id="KW-0379">Hydroxylation</keyword>
<keyword id="KW-1185">Reference proteome</keyword>
<keyword id="KW-0677">Repeat</keyword>
<keyword id="KW-0964">Secreted</keyword>
<keyword id="KW-0732">Signal</keyword>
<keyword id="KW-0765">Sulfation</keyword>
<accession>O88207</accession>
<accession>A3KGE3</accession>
<accession>Q3UG94</accession>
<accession>Q6F6B0</accession>
<proteinExistence type="evidence at protein level"/>